<keyword id="KW-1003">Cell membrane</keyword>
<keyword id="KW-0472">Membrane</keyword>
<keyword id="KW-0808">Transferase</keyword>
<keyword id="KW-0812">Transmembrane</keyword>
<keyword id="KW-1133">Transmembrane helix</keyword>
<feature type="chain" id="PRO_1000164135" description="Phosphatidylglycerol--prolipoprotein diacylglyceryl transferase">
    <location>
        <begin position="1"/>
        <end position="255"/>
    </location>
</feature>
<feature type="transmembrane region" description="Helical" evidence="1">
    <location>
        <begin position="15"/>
        <end position="35"/>
    </location>
</feature>
<feature type="transmembrane region" description="Helical" evidence="1">
    <location>
        <begin position="46"/>
        <end position="66"/>
    </location>
</feature>
<feature type="transmembrane region" description="Helical" evidence="1">
    <location>
        <begin position="84"/>
        <end position="104"/>
    </location>
</feature>
<feature type="transmembrane region" description="Helical" evidence="1">
    <location>
        <begin position="169"/>
        <end position="189"/>
    </location>
</feature>
<feature type="transmembrane region" description="Helical" evidence="1">
    <location>
        <begin position="196"/>
        <end position="216"/>
    </location>
</feature>
<feature type="transmembrane region" description="Helical" evidence="1">
    <location>
        <begin position="228"/>
        <end position="248"/>
    </location>
</feature>
<feature type="binding site" evidence="1">
    <location>
        <position position="130"/>
    </location>
    <ligand>
        <name>a 1,2-diacyl-sn-glycero-3-phospho-(1'-sn-glycerol)</name>
        <dbReference type="ChEBI" id="CHEBI:64716"/>
    </ligand>
</feature>
<dbReference type="EC" id="2.5.1.145" evidence="1"/>
<dbReference type="EMBL" id="AP009049">
    <property type="protein sequence ID" value="BAH07443.1"/>
    <property type="molecule type" value="Genomic_DNA"/>
</dbReference>
<dbReference type="RefSeq" id="WP_012103039.1">
    <property type="nucleotide sequence ID" value="NC_011837.1"/>
</dbReference>
<dbReference type="SMR" id="B9E4L8"/>
<dbReference type="KEGG" id="ckr:CKR_2392"/>
<dbReference type="HOGENOM" id="CLU_013386_0_1_9"/>
<dbReference type="UniPathway" id="UPA00664"/>
<dbReference type="Proteomes" id="UP000007969">
    <property type="component" value="Chromosome"/>
</dbReference>
<dbReference type="GO" id="GO:0005886">
    <property type="term" value="C:plasma membrane"/>
    <property type="evidence" value="ECO:0007669"/>
    <property type="project" value="UniProtKB-SubCell"/>
</dbReference>
<dbReference type="GO" id="GO:0008961">
    <property type="term" value="F:phosphatidylglycerol-prolipoprotein diacylglyceryl transferase activity"/>
    <property type="evidence" value="ECO:0007669"/>
    <property type="project" value="UniProtKB-UniRule"/>
</dbReference>
<dbReference type="GO" id="GO:0042158">
    <property type="term" value="P:lipoprotein biosynthetic process"/>
    <property type="evidence" value="ECO:0007669"/>
    <property type="project" value="UniProtKB-UniRule"/>
</dbReference>
<dbReference type="HAMAP" id="MF_01147">
    <property type="entry name" value="Lgt"/>
    <property type="match status" value="1"/>
</dbReference>
<dbReference type="InterPro" id="IPR001640">
    <property type="entry name" value="Lgt"/>
</dbReference>
<dbReference type="NCBIfam" id="TIGR00544">
    <property type="entry name" value="lgt"/>
    <property type="match status" value="1"/>
</dbReference>
<dbReference type="PANTHER" id="PTHR30589:SF0">
    <property type="entry name" value="PHOSPHATIDYLGLYCEROL--PROLIPOPROTEIN DIACYLGLYCERYL TRANSFERASE"/>
    <property type="match status" value="1"/>
</dbReference>
<dbReference type="PANTHER" id="PTHR30589">
    <property type="entry name" value="PROLIPOPROTEIN DIACYLGLYCERYL TRANSFERASE"/>
    <property type="match status" value="1"/>
</dbReference>
<dbReference type="Pfam" id="PF01790">
    <property type="entry name" value="LGT"/>
    <property type="match status" value="1"/>
</dbReference>
<dbReference type="PROSITE" id="PS01311">
    <property type="entry name" value="LGT"/>
    <property type="match status" value="1"/>
</dbReference>
<evidence type="ECO:0000255" key="1">
    <source>
        <dbReference type="HAMAP-Rule" id="MF_01147"/>
    </source>
</evidence>
<proteinExistence type="inferred from homology"/>
<gene>
    <name evidence="1" type="primary">lgt</name>
    <name type="ordered locus">CKR_2392</name>
</gene>
<sequence length="255" mass="29060">MDPIAFSIGGFQIRWYGIMIALGVLAALILANLNCRYKGYNFDSLIDVFLISFPLAIIGARVYYVVFQFQDYRNNLMDIFNIRLGGLAIHGGIIFGLGAAYIVSRYKKMDFIKLWDCFAPSIILGQAIGRWGNFFNGEAHGGIVGYEFISKFPLFIQRGMYINGDYYNPTFLYESLWDLIVCIILVYIFRKKHKRGTVICTYVGLYSLGRFFIEGLRTDSLMIGHIRVAQLVSFIGIVLSISFFVYLKGRGKRVD</sequence>
<comment type="function">
    <text evidence="1">Catalyzes the transfer of the diacylglyceryl group from phosphatidylglycerol to the sulfhydryl group of the N-terminal cysteine of a prolipoprotein, the first step in the formation of mature lipoproteins.</text>
</comment>
<comment type="catalytic activity">
    <reaction evidence="1">
        <text>L-cysteinyl-[prolipoprotein] + a 1,2-diacyl-sn-glycero-3-phospho-(1'-sn-glycerol) = an S-1,2-diacyl-sn-glyceryl-L-cysteinyl-[prolipoprotein] + sn-glycerol 1-phosphate + H(+)</text>
        <dbReference type="Rhea" id="RHEA:56712"/>
        <dbReference type="Rhea" id="RHEA-COMP:14679"/>
        <dbReference type="Rhea" id="RHEA-COMP:14680"/>
        <dbReference type="ChEBI" id="CHEBI:15378"/>
        <dbReference type="ChEBI" id="CHEBI:29950"/>
        <dbReference type="ChEBI" id="CHEBI:57685"/>
        <dbReference type="ChEBI" id="CHEBI:64716"/>
        <dbReference type="ChEBI" id="CHEBI:140658"/>
        <dbReference type="EC" id="2.5.1.145"/>
    </reaction>
</comment>
<comment type="pathway">
    <text evidence="1">Protein modification; lipoprotein biosynthesis (diacylglyceryl transfer).</text>
</comment>
<comment type="subcellular location">
    <subcellularLocation>
        <location evidence="1">Cell membrane</location>
        <topology evidence="1">Multi-pass membrane protein</topology>
    </subcellularLocation>
</comment>
<comment type="similarity">
    <text evidence="1">Belongs to the Lgt family.</text>
</comment>
<name>LGT_CLOK1</name>
<organism>
    <name type="scientific">Clostridium kluyveri (strain NBRC 12016)</name>
    <dbReference type="NCBI Taxonomy" id="583346"/>
    <lineage>
        <taxon>Bacteria</taxon>
        <taxon>Bacillati</taxon>
        <taxon>Bacillota</taxon>
        <taxon>Clostridia</taxon>
        <taxon>Eubacteriales</taxon>
        <taxon>Clostridiaceae</taxon>
        <taxon>Clostridium</taxon>
    </lineage>
</organism>
<protein>
    <recommendedName>
        <fullName evidence="1">Phosphatidylglycerol--prolipoprotein diacylglyceryl transferase</fullName>
        <ecNumber evidence="1">2.5.1.145</ecNumber>
    </recommendedName>
</protein>
<reference key="1">
    <citation type="submission" date="2005-09" db="EMBL/GenBank/DDBJ databases">
        <title>Complete genome sequence of Clostridium kluyveri and comparative genomics of Clostridia species.</title>
        <authorList>
            <person name="Inui M."/>
            <person name="Nonaka H."/>
            <person name="Shinoda Y."/>
            <person name="Ikenaga Y."/>
            <person name="Abe M."/>
            <person name="Naito K."/>
            <person name="Vertes A.A."/>
            <person name="Yukawa H."/>
        </authorList>
    </citation>
    <scope>NUCLEOTIDE SEQUENCE [LARGE SCALE GENOMIC DNA]</scope>
    <source>
        <strain>NBRC 12016</strain>
    </source>
</reference>
<accession>B9E4L8</accession>